<accession>Q1XDM7</accession>
<comment type="function">
    <text evidence="1">Produces ATP from ADP in the presence of a proton gradient across the membrane.</text>
</comment>
<comment type="subunit">
    <text evidence="1">F-type ATPases have 2 components, CF(1) - the catalytic core - and CF(0) - the membrane proton channel. CF(1) has five subunits: alpha(3), beta(3), gamma(1), delta(1), epsilon(1). CF(0) has three main subunits: a, b and c.</text>
</comment>
<comment type="subcellular location">
    <subcellularLocation>
        <location evidence="1">Plastid</location>
        <location evidence="1">Chloroplast thylakoid membrane</location>
        <topology evidence="1">Peripheral membrane protein</topology>
    </subcellularLocation>
</comment>
<comment type="similarity">
    <text evidence="1">Belongs to the ATPase epsilon chain family.</text>
</comment>
<gene>
    <name evidence="1" type="primary">atpE</name>
</gene>
<reference key="1">
    <citation type="submission" date="2003-11" db="EMBL/GenBank/DDBJ databases">
        <title>Whole genome sequence of Porphyra yezoensis chloroplast.</title>
        <authorList>
            <person name="Kunimoto M."/>
            <person name="Morishima K."/>
            <person name="Yoshikawa M."/>
            <person name="Fukuda S."/>
            <person name="Kobayashi T."/>
            <person name="Kobayashi M."/>
            <person name="Okazaki T."/>
            <person name="Ohara I."/>
            <person name="Nakayama I."/>
        </authorList>
    </citation>
    <scope>NUCLEOTIDE SEQUENCE [LARGE SCALE GENOMIC DNA]</scope>
    <source>
        <strain>U-51</strain>
    </source>
</reference>
<geneLocation type="chloroplast"/>
<keyword id="KW-0066">ATP synthesis</keyword>
<keyword id="KW-0139">CF(1)</keyword>
<keyword id="KW-0150">Chloroplast</keyword>
<keyword id="KW-0375">Hydrogen ion transport</keyword>
<keyword id="KW-0406">Ion transport</keyword>
<keyword id="KW-0472">Membrane</keyword>
<keyword id="KW-0934">Plastid</keyword>
<keyword id="KW-0793">Thylakoid</keyword>
<keyword id="KW-0813">Transport</keyword>
<feature type="chain" id="PRO_0000275225" description="ATP synthase epsilon chain, chloroplastic">
    <location>
        <begin position="1"/>
        <end position="134"/>
    </location>
</feature>
<sequence length="134" mass="14477">MTLNIRIIAPDRTVWDAEAQEIILPSSTGQLGILTGHAPLLTALDIGVMRVRVDKEWMPIVLLGGFAEIENNQLTILVNGAEEASQIDLSEAEKNLDTATQLLSDASSNKEKIEATQKIRKARARVQAATAATS</sequence>
<organism>
    <name type="scientific">Pyropia yezoensis</name>
    <name type="common">Susabi-nori</name>
    <name type="synonym">Porphyra yezoensis</name>
    <dbReference type="NCBI Taxonomy" id="2788"/>
    <lineage>
        <taxon>Eukaryota</taxon>
        <taxon>Rhodophyta</taxon>
        <taxon>Bangiophyceae</taxon>
        <taxon>Bangiales</taxon>
        <taxon>Bangiaceae</taxon>
        <taxon>Pyropia</taxon>
    </lineage>
</organism>
<protein>
    <recommendedName>
        <fullName evidence="1">ATP synthase epsilon chain, chloroplastic</fullName>
    </recommendedName>
    <alternativeName>
        <fullName evidence="1">ATP synthase F1 sector epsilon subunit</fullName>
    </alternativeName>
    <alternativeName>
        <fullName evidence="1">F-ATPase epsilon subunit</fullName>
    </alternativeName>
</protein>
<dbReference type="EMBL" id="AP006715">
    <property type="protein sequence ID" value="BAE92384.1"/>
    <property type="molecule type" value="Genomic_DNA"/>
</dbReference>
<dbReference type="RefSeq" id="YP_536941.1">
    <property type="nucleotide sequence ID" value="NC_007932.1"/>
</dbReference>
<dbReference type="SMR" id="Q1XDM7"/>
<dbReference type="GeneID" id="3978836"/>
<dbReference type="GO" id="GO:0009535">
    <property type="term" value="C:chloroplast thylakoid membrane"/>
    <property type="evidence" value="ECO:0007669"/>
    <property type="project" value="UniProtKB-SubCell"/>
</dbReference>
<dbReference type="GO" id="GO:0045259">
    <property type="term" value="C:proton-transporting ATP synthase complex"/>
    <property type="evidence" value="ECO:0007669"/>
    <property type="project" value="UniProtKB-KW"/>
</dbReference>
<dbReference type="GO" id="GO:0005524">
    <property type="term" value="F:ATP binding"/>
    <property type="evidence" value="ECO:0007669"/>
    <property type="project" value="UniProtKB-UniRule"/>
</dbReference>
<dbReference type="GO" id="GO:0046933">
    <property type="term" value="F:proton-transporting ATP synthase activity, rotational mechanism"/>
    <property type="evidence" value="ECO:0007669"/>
    <property type="project" value="UniProtKB-UniRule"/>
</dbReference>
<dbReference type="CDD" id="cd12152">
    <property type="entry name" value="F1-ATPase_delta"/>
    <property type="match status" value="1"/>
</dbReference>
<dbReference type="FunFam" id="2.60.15.10:FF:000002">
    <property type="entry name" value="ATP synthase epsilon chain, chloroplastic"/>
    <property type="match status" value="1"/>
</dbReference>
<dbReference type="Gene3D" id="2.60.15.10">
    <property type="entry name" value="F0F1 ATP synthase delta/epsilon subunit, N-terminal"/>
    <property type="match status" value="1"/>
</dbReference>
<dbReference type="Gene3D" id="1.10.287.540">
    <property type="entry name" value="Helix hairpin bin"/>
    <property type="match status" value="1"/>
</dbReference>
<dbReference type="HAMAP" id="MF_00530">
    <property type="entry name" value="ATP_synth_epsil_bac"/>
    <property type="match status" value="1"/>
</dbReference>
<dbReference type="InterPro" id="IPR001469">
    <property type="entry name" value="ATP_synth_F1_dsu/esu"/>
</dbReference>
<dbReference type="InterPro" id="IPR020546">
    <property type="entry name" value="ATP_synth_F1_dsu/esu_N"/>
</dbReference>
<dbReference type="InterPro" id="IPR020547">
    <property type="entry name" value="ATP_synth_F1_esu_C"/>
</dbReference>
<dbReference type="InterPro" id="IPR036771">
    <property type="entry name" value="ATPsynth_dsu/esu_N"/>
</dbReference>
<dbReference type="NCBIfam" id="TIGR01216">
    <property type="entry name" value="ATP_synt_epsi"/>
    <property type="match status" value="1"/>
</dbReference>
<dbReference type="PANTHER" id="PTHR13822">
    <property type="entry name" value="ATP SYNTHASE DELTA/EPSILON CHAIN"/>
    <property type="match status" value="1"/>
</dbReference>
<dbReference type="PANTHER" id="PTHR13822:SF10">
    <property type="entry name" value="ATP SYNTHASE EPSILON CHAIN, CHLOROPLASTIC"/>
    <property type="match status" value="1"/>
</dbReference>
<dbReference type="Pfam" id="PF00401">
    <property type="entry name" value="ATP-synt_DE"/>
    <property type="match status" value="1"/>
</dbReference>
<dbReference type="Pfam" id="PF02823">
    <property type="entry name" value="ATP-synt_DE_N"/>
    <property type="match status" value="1"/>
</dbReference>
<dbReference type="SUPFAM" id="SSF51344">
    <property type="entry name" value="Epsilon subunit of F1F0-ATP synthase N-terminal domain"/>
    <property type="match status" value="1"/>
</dbReference>
<name>ATPE_PYRYE</name>
<evidence type="ECO:0000255" key="1">
    <source>
        <dbReference type="HAMAP-Rule" id="MF_00530"/>
    </source>
</evidence>
<proteinExistence type="inferred from homology"/>